<sequence length="314" mass="35516">MVTYLLANFGGPRTSQEIVSFLQALLTDRDVTGGMIPSMLHRPLFSYIAKRRAPHVARQYAYLGGGSPIFQDTERLAQNLSQELQASVIPFHRYLPETHRETLQALQESQGSIVGIPLFPHYTFAVTGSIIRFFLQHLPEKPISWITQFGVHPEFVSCMQQHIRDCLAAQQIAVEDCYFLFSVHGLPQRHIRLGDPYAQQCQASFEALRGELEGKIAFQSKFGIGKWLDPSTQEVCQSLRTKKRHIVIVPFGFVSDHIETLHEIDHLYVPILLQKGYRVVRIPAINASSRWVSSLAAIVRSSPQETSLEPLLMP</sequence>
<evidence type="ECO:0000255" key="1">
    <source>
        <dbReference type="HAMAP-Rule" id="MF_00323"/>
    </source>
</evidence>
<dbReference type="EC" id="4.98.1.1" evidence="1"/>
<dbReference type="EMBL" id="CP000051">
    <property type="protein sequence ID" value="AAX50760.1"/>
    <property type="molecule type" value="Genomic_DNA"/>
</dbReference>
<dbReference type="RefSeq" id="WP_011324752.1">
    <property type="nucleotide sequence ID" value="NC_007429.1"/>
</dbReference>
<dbReference type="SMR" id="Q3KLL2"/>
<dbReference type="KEGG" id="cta:CTA_0532"/>
<dbReference type="HOGENOM" id="CLU_018884_1_0_0"/>
<dbReference type="UniPathway" id="UPA00252">
    <property type="reaction ID" value="UER00325"/>
</dbReference>
<dbReference type="Proteomes" id="UP000002532">
    <property type="component" value="Chromosome"/>
</dbReference>
<dbReference type="GO" id="GO:0005737">
    <property type="term" value="C:cytoplasm"/>
    <property type="evidence" value="ECO:0007669"/>
    <property type="project" value="UniProtKB-SubCell"/>
</dbReference>
<dbReference type="GO" id="GO:0004325">
    <property type="term" value="F:ferrochelatase activity"/>
    <property type="evidence" value="ECO:0007669"/>
    <property type="project" value="UniProtKB-UniRule"/>
</dbReference>
<dbReference type="GO" id="GO:0046872">
    <property type="term" value="F:metal ion binding"/>
    <property type="evidence" value="ECO:0007669"/>
    <property type="project" value="UniProtKB-KW"/>
</dbReference>
<dbReference type="GO" id="GO:0006783">
    <property type="term" value="P:heme biosynthetic process"/>
    <property type="evidence" value="ECO:0007669"/>
    <property type="project" value="UniProtKB-UniRule"/>
</dbReference>
<dbReference type="CDD" id="cd00419">
    <property type="entry name" value="Ferrochelatase_C"/>
    <property type="match status" value="1"/>
</dbReference>
<dbReference type="CDD" id="cd03411">
    <property type="entry name" value="Ferrochelatase_N"/>
    <property type="match status" value="1"/>
</dbReference>
<dbReference type="Gene3D" id="3.40.50.1400">
    <property type="match status" value="2"/>
</dbReference>
<dbReference type="HAMAP" id="MF_00323">
    <property type="entry name" value="Ferrochelatase"/>
    <property type="match status" value="1"/>
</dbReference>
<dbReference type="InterPro" id="IPR001015">
    <property type="entry name" value="Ferrochelatase"/>
</dbReference>
<dbReference type="InterPro" id="IPR019772">
    <property type="entry name" value="Ferrochelatase_AS"/>
</dbReference>
<dbReference type="InterPro" id="IPR033644">
    <property type="entry name" value="Ferrochelatase_C"/>
</dbReference>
<dbReference type="InterPro" id="IPR033659">
    <property type="entry name" value="Ferrochelatase_N"/>
</dbReference>
<dbReference type="NCBIfam" id="TIGR00109">
    <property type="entry name" value="hemH"/>
    <property type="match status" value="1"/>
</dbReference>
<dbReference type="PANTHER" id="PTHR11108">
    <property type="entry name" value="FERROCHELATASE"/>
    <property type="match status" value="1"/>
</dbReference>
<dbReference type="PANTHER" id="PTHR11108:SF1">
    <property type="entry name" value="FERROCHELATASE, MITOCHONDRIAL"/>
    <property type="match status" value="1"/>
</dbReference>
<dbReference type="Pfam" id="PF00762">
    <property type="entry name" value="Ferrochelatase"/>
    <property type="match status" value="1"/>
</dbReference>
<dbReference type="SUPFAM" id="SSF53800">
    <property type="entry name" value="Chelatase"/>
    <property type="match status" value="1"/>
</dbReference>
<dbReference type="PROSITE" id="PS00534">
    <property type="entry name" value="FERROCHELATASE"/>
    <property type="match status" value="1"/>
</dbReference>
<organism>
    <name type="scientific">Chlamydia trachomatis serovar A (strain ATCC VR-571B / DSM 19440 / HAR-13)</name>
    <dbReference type="NCBI Taxonomy" id="315277"/>
    <lineage>
        <taxon>Bacteria</taxon>
        <taxon>Pseudomonadati</taxon>
        <taxon>Chlamydiota</taxon>
        <taxon>Chlamydiia</taxon>
        <taxon>Chlamydiales</taxon>
        <taxon>Chlamydiaceae</taxon>
        <taxon>Chlamydia/Chlamydophila group</taxon>
        <taxon>Chlamydia</taxon>
    </lineage>
</organism>
<name>HEMH_CHLTA</name>
<reference key="1">
    <citation type="journal article" date="2005" name="Infect. Immun.">
        <title>Comparative genomic analysis of Chlamydia trachomatis oculotropic and genitotropic strains.</title>
        <authorList>
            <person name="Carlson J.H."/>
            <person name="Porcella S.F."/>
            <person name="McClarty G."/>
            <person name="Caldwell H.D."/>
        </authorList>
    </citation>
    <scope>NUCLEOTIDE SEQUENCE [LARGE SCALE GENOMIC DNA]</scope>
    <source>
        <strain>ATCC VR-571B / DSM 19440 / HAR-13</strain>
    </source>
</reference>
<keyword id="KW-0963">Cytoplasm</keyword>
<keyword id="KW-0350">Heme biosynthesis</keyword>
<keyword id="KW-0408">Iron</keyword>
<keyword id="KW-0456">Lyase</keyword>
<keyword id="KW-0479">Metal-binding</keyword>
<keyword id="KW-0627">Porphyrin biosynthesis</keyword>
<feature type="chain" id="PRO_1000019292" description="Ferrochelatase">
    <location>
        <begin position="1"/>
        <end position="314"/>
    </location>
</feature>
<feature type="binding site" evidence="1">
    <location>
        <position position="184"/>
    </location>
    <ligand>
        <name>Fe cation</name>
        <dbReference type="ChEBI" id="CHEBI:24875"/>
    </ligand>
</feature>
<feature type="binding site" evidence="1">
    <location>
        <position position="259"/>
    </location>
    <ligand>
        <name>Fe cation</name>
        <dbReference type="ChEBI" id="CHEBI:24875"/>
    </ligand>
</feature>
<comment type="function">
    <text evidence="1">Catalyzes the ferrous insertion into protoporphyrin IX.</text>
</comment>
<comment type="catalytic activity">
    <reaction evidence="1">
        <text>heme b + 2 H(+) = protoporphyrin IX + Fe(2+)</text>
        <dbReference type="Rhea" id="RHEA:22584"/>
        <dbReference type="ChEBI" id="CHEBI:15378"/>
        <dbReference type="ChEBI" id="CHEBI:29033"/>
        <dbReference type="ChEBI" id="CHEBI:57306"/>
        <dbReference type="ChEBI" id="CHEBI:60344"/>
        <dbReference type="EC" id="4.98.1.1"/>
    </reaction>
</comment>
<comment type="pathway">
    <text evidence="1">Porphyrin-containing compound metabolism; protoheme biosynthesis; protoheme from protoporphyrin-IX: step 1/1.</text>
</comment>
<comment type="subcellular location">
    <subcellularLocation>
        <location evidence="1">Cytoplasm</location>
    </subcellularLocation>
</comment>
<comment type="similarity">
    <text evidence="1">Belongs to the ferrochelatase family.</text>
</comment>
<gene>
    <name evidence="1" type="primary">hemH</name>
    <name type="ordered locus">CTA_0532</name>
</gene>
<proteinExistence type="inferred from homology"/>
<protein>
    <recommendedName>
        <fullName evidence="1">Ferrochelatase</fullName>
        <ecNumber evidence="1">4.98.1.1</ecNumber>
    </recommendedName>
    <alternativeName>
        <fullName evidence="1">Heme synthase</fullName>
    </alternativeName>
    <alternativeName>
        <fullName evidence="1">Protoheme ferro-lyase</fullName>
    </alternativeName>
</protein>
<accession>Q3KLL2</accession>